<feature type="chain" id="PRO_1000136185" description="UPF0227 protein YcfP">
    <location>
        <begin position="1"/>
        <end position="180"/>
    </location>
</feature>
<sequence length="180" mass="21226">MIIYLHGFDSNSPGNHEKVLQLQFIDPDVRLISYSTRHPKHDMQHLLKEVDKMLQLNVDERPLICGVGLGGYWAERIGFLCDIRQVIFNPNLFPYENMEGKIDRPEEYADIATKCVTNFREKNRDRCLVILSRNDEALNSQRTSEELHHYYEIVWDEEQTHKFKNISPHLQRIKAFKTLG</sequence>
<organism>
    <name type="scientific">Escherichia coli O157:H7 (strain EC4115 / EHEC)</name>
    <dbReference type="NCBI Taxonomy" id="444450"/>
    <lineage>
        <taxon>Bacteria</taxon>
        <taxon>Pseudomonadati</taxon>
        <taxon>Pseudomonadota</taxon>
        <taxon>Gammaproteobacteria</taxon>
        <taxon>Enterobacterales</taxon>
        <taxon>Enterobacteriaceae</taxon>
        <taxon>Escherichia</taxon>
    </lineage>
</organism>
<accession>B5YVX7</accession>
<name>YCFP_ECO5E</name>
<reference key="1">
    <citation type="journal article" date="2011" name="Proc. Natl. Acad. Sci. U.S.A.">
        <title>Genomic anatomy of Escherichia coli O157:H7 outbreaks.</title>
        <authorList>
            <person name="Eppinger M."/>
            <person name="Mammel M.K."/>
            <person name="Leclerc J.E."/>
            <person name="Ravel J."/>
            <person name="Cebula T.A."/>
        </authorList>
    </citation>
    <scope>NUCLEOTIDE SEQUENCE [LARGE SCALE GENOMIC DNA]</scope>
    <source>
        <strain>EC4115 / EHEC</strain>
    </source>
</reference>
<dbReference type="EMBL" id="CP001164">
    <property type="protein sequence ID" value="ACI35678.1"/>
    <property type="molecule type" value="Genomic_DNA"/>
</dbReference>
<dbReference type="RefSeq" id="WP_000587933.1">
    <property type="nucleotide sequence ID" value="NC_011353.1"/>
</dbReference>
<dbReference type="SMR" id="B5YVX7"/>
<dbReference type="ESTHER" id="ecoli-ycfp">
    <property type="family name" value="abh_upf00227"/>
</dbReference>
<dbReference type="GeneID" id="93776300"/>
<dbReference type="KEGG" id="ecf:ECH74115_1488"/>
<dbReference type="HOGENOM" id="CLU_128769_0_0_6"/>
<dbReference type="FunFam" id="3.40.50.1820:FF:000007">
    <property type="entry name" value="UPF0227 protein YcfP"/>
    <property type="match status" value="1"/>
</dbReference>
<dbReference type="Gene3D" id="3.40.50.1820">
    <property type="entry name" value="alpha/beta hydrolase"/>
    <property type="match status" value="1"/>
</dbReference>
<dbReference type="HAMAP" id="MF_01047">
    <property type="entry name" value="UPF0227"/>
    <property type="match status" value="1"/>
</dbReference>
<dbReference type="InterPro" id="IPR029058">
    <property type="entry name" value="AB_hydrolase_fold"/>
</dbReference>
<dbReference type="InterPro" id="IPR022987">
    <property type="entry name" value="UPF0227"/>
</dbReference>
<dbReference type="InterPro" id="IPR008886">
    <property type="entry name" value="UPF0227/Esterase_YqiA"/>
</dbReference>
<dbReference type="NCBIfam" id="NF003431">
    <property type="entry name" value="PRK04940.1"/>
    <property type="match status" value="1"/>
</dbReference>
<dbReference type="PANTHER" id="PTHR35602">
    <property type="entry name" value="ESTERASE YQIA-RELATED"/>
    <property type="match status" value="1"/>
</dbReference>
<dbReference type="PANTHER" id="PTHR35602:SF2">
    <property type="entry name" value="UPF0227 PROTEIN YCFP"/>
    <property type="match status" value="1"/>
</dbReference>
<dbReference type="Pfam" id="PF05728">
    <property type="entry name" value="UPF0227"/>
    <property type="match status" value="1"/>
</dbReference>
<dbReference type="SUPFAM" id="SSF53474">
    <property type="entry name" value="alpha/beta-Hydrolases"/>
    <property type="match status" value="1"/>
</dbReference>
<gene>
    <name evidence="1" type="primary">ycfP</name>
    <name type="ordered locus">ECH74115_1488</name>
</gene>
<evidence type="ECO:0000255" key="1">
    <source>
        <dbReference type="HAMAP-Rule" id="MF_01047"/>
    </source>
</evidence>
<protein>
    <recommendedName>
        <fullName evidence="1">UPF0227 protein YcfP</fullName>
    </recommendedName>
</protein>
<proteinExistence type="inferred from homology"/>
<comment type="similarity">
    <text evidence="1">Belongs to the UPF0227 family.</text>
</comment>